<sequence>MHVLVINGPNLNRLGKRQPEVYGSTTLADVEAMVARRADALGVGVSFIQSNHEGELIDAVHNAADHGWPVIINPGGFTHTSVALRDALAEIADGAGFVEVHISNVHAREPFRAHSYLSPIALGVIAGLGVRGYELALEFLADRER</sequence>
<keyword id="KW-0028">Amino-acid biosynthesis</keyword>
<keyword id="KW-0057">Aromatic amino acid biosynthesis</keyword>
<keyword id="KW-0456">Lyase</keyword>
<keyword id="KW-1185">Reference proteome</keyword>
<feature type="chain" id="PRO_0000159895" description="3-dehydroquinate dehydratase 2">
    <location>
        <begin position="1"/>
        <end position="145"/>
    </location>
</feature>
<feature type="active site" description="Proton acceptor" evidence="1">
    <location>
        <position position="22"/>
    </location>
</feature>
<feature type="active site" description="Proton donor" evidence="1">
    <location>
        <position position="101"/>
    </location>
</feature>
<feature type="binding site" evidence="1">
    <location>
        <position position="73"/>
    </location>
    <ligand>
        <name>substrate</name>
    </ligand>
</feature>
<feature type="binding site" evidence="1">
    <location>
        <position position="79"/>
    </location>
    <ligand>
        <name>substrate</name>
    </ligand>
</feature>
<feature type="binding site" evidence="1">
    <location>
        <position position="86"/>
    </location>
    <ligand>
        <name>substrate</name>
    </ligand>
</feature>
<feature type="binding site" evidence="1">
    <location>
        <begin position="102"/>
        <end position="103"/>
    </location>
    <ligand>
        <name>substrate</name>
    </ligand>
</feature>
<feature type="binding site" evidence="1">
    <location>
        <position position="112"/>
    </location>
    <ligand>
        <name>substrate</name>
    </ligand>
</feature>
<feature type="site" description="Transition state stabilizer" evidence="1">
    <location>
        <position position="17"/>
    </location>
</feature>
<dbReference type="EC" id="4.2.1.10"/>
<dbReference type="EMBL" id="BA000035">
    <property type="protein sequence ID" value="BAC18549.1"/>
    <property type="molecule type" value="Genomic_DNA"/>
</dbReference>
<dbReference type="RefSeq" id="WP_006767740.1">
    <property type="nucleotide sequence ID" value="NC_004369.1"/>
</dbReference>
<dbReference type="SMR" id="Q8FT32"/>
<dbReference type="STRING" id="196164.gene:10742160"/>
<dbReference type="KEGG" id="cef:CE1739"/>
<dbReference type="eggNOG" id="COG0757">
    <property type="taxonomic scope" value="Bacteria"/>
</dbReference>
<dbReference type="HOGENOM" id="CLU_090968_2_0_11"/>
<dbReference type="OrthoDB" id="9790793at2"/>
<dbReference type="UniPathway" id="UPA00053">
    <property type="reaction ID" value="UER00086"/>
</dbReference>
<dbReference type="Proteomes" id="UP000001409">
    <property type="component" value="Chromosome"/>
</dbReference>
<dbReference type="GO" id="GO:0003855">
    <property type="term" value="F:3-dehydroquinate dehydratase activity"/>
    <property type="evidence" value="ECO:0007669"/>
    <property type="project" value="UniProtKB-UniRule"/>
</dbReference>
<dbReference type="GO" id="GO:0008652">
    <property type="term" value="P:amino acid biosynthetic process"/>
    <property type="evidence" value="ECO:0007669"/>
    <property type="project" value="UniProtKB-KW"/>
</dbReference>
<dbReference type="GO" id="GO:0009073">
    <property type="term" value="P:aromatic amino acid family biosynthetic process"/>
    <property type="evidence" value="ECO:0007669"/>
    <property type="project" value="UniProtKB-KW"/>
</dbReference>
<dbReference type="GO" id="GO:0009423">
    <property type="term" value="P:chorismate biosynthetic process"/>
    <property type="evidence" value="ECO:0007669"/>
    <property type="project" value="UniProtKB-UniRule"/>
</dbReference>
<dbReference type="GO" id="GO:0019631">
    <property type="term" value="P:quinate catabolic process"/>
    <property type="evidence" value="ECO:0007669"/>
    <property type="project" value="TreeGrafter"/>
</dbReference>
<dbReference type="CDD" id="cd00466">
    <property type="entry name" value="DHQase_II"/>
    <property type="match status" value="1"/>
</dbReference>
<dbReference type="Gene3D" id="3.40.50.9100">
    <property type="entry name" value="Dehydroquinase, class II"/>
    <property type="match status" value="1"/>
</dbReference>
<dbReference type="HAMAP" id="MF_00169">
    <property type="entry name" value="AroQ"/>
    <property type="match status" value="1"/>
</dbReference>
<dbReference type="InterPro" id="IPR001874">
    <property type="entry name" value="DHquinase_II"/>
</dbReference>
<dbReference type="InterPro" id="IPR018509">
    <property type="entry name" value="DHquinase_II_CS"/>
</dbReference>
<dbReference type="InterPro" id="IPR036441">
    <property type="entry name" value="DHquinase_II_sf"/>
</dbReference>
<dbReference type="NCBIfam" id="TIGR01088">
    <property type="entry name" value="aroQ"/>
    <property type="match status" value="1"/>
</dbReference>
<dbReference type="NCBIfam" id="NF003805">
    <property type="entry name" value="PRK05395.1-2"/>
    <property type="match status" value="1"/>
</dbReference>
<dbReference type="NCBIfam" id="NF003806">
    <property type="entry name" value="PRK05395.1-3"/>
    <property type="match status" value="1"/>
</dbReference>
<dbReference type="NCBIfam" id="NF003807">
    <property type="entry name" value="PRK05395.1-4"/>
    <property type="match status" value="1"/>
</dbReference>
<dbReference type="PANTHER" id="PTHR21272">
    <property type="entry name" value="CATABOLIC 3-DEHYDROQUINASE"/>
    <property type="match status" value="1"/>
</dbReference>
<dbReference type="PANTHER" id="PTHR21272:SF3">
    <property type="entry name" value="CATABOLIC 3-DEHYDROQUINASE"/>
    <property type="match status" value="1"/>
</dbReference>
<dbReference type="Pfam" id="PF01220">
    <property type="entry name" value="DHquinase_II"/>
    <property type="match status" value="1"/>
</dbReference>
<dbReference type="PIRSF" id="PIRSF001399">
    <property type="entry name" value="DHquinase_II"/>
    <property type="match status" value="1"/>
</dbReference>
<dbReference type="SUPFAM" id="SSF52304">
    <property type="entry name" value="Type II 3-dehydroquinate dehydratase"/>
    <property type="match status" value="1"/>
</dbReference>
<dbReference type="PROSITE" id="PS01029">
    <property type="entry name" value="DEHYDROQUINASE_II"/>
    <property type="match status" value="1"/>
</dbReference>
<gene>
    <name type="primary">aroQ2</name>
    <name type="ordered locus">CE1739</name>
</gene>
<protein>
    <recommendedName>
        <fullName>3-dehydroquinate dehydratase 2</fullName>
        <shortName>3-dehydroquinase 2</shortName>
        <ecNumber>4.2.1.10</ecNumber>
    </recommendedName>
    <alternativeName>
        <fullName>Type II DHQase 2</fullName>
    </alternativeName>
</protein>
<reference key="1">
    <citation type="journal article" date="2003" name="Genome Res.">
        <title>Comparative complete genome sequence analysis of the amino acid replacements responsible for the thermostability of Corynebacterium efficiens.</title>
        <authorList>
            <person name="Nishio Y."/>
            <person name="Nakamura Y."/>
            <person name="Kawarabayasi Y."/>
            <person name="Usuda Y."/>
            <person name="Kimura E."/>
            <person name="Sugimoto S."/>
            <person name="Matsui K."/>
            <person name="Yamagishi A."/>
            <person name="Kikuchi H."/>
            <person name="Ikeo K."/>
            <person name="Gojobori T."/>
        </authorList>
    </citation>
    <scope>NUCLEOTIDE SEQUENCE [LARGE SCALE GENOMIC DNA]</scope>
    <source>
        <strain>DSM 44549 / YS-314 / AJ 12310 / JCM 11189 / NBRC 100395</strain>
    </source>
</reference>
<proteinExistence type="inferred from homology"/>
<accession>Q8FT32</accession>
<organism>
    <name type="scientific">Corynebacterium efficiens (strain DSM 44549 / YS-314 / AJ 12310 / JCM 11189 / NBRC 100395)</name>
    <dbReference type="NCBI Taxonomy" id="196164"/>
    <lineage>
        <taxon>Bacteria</taxon>
        <taxon>Bacillati</taxon>
        <taxon>Actinomycetota</taxon>
        <taxon>Actinomycetes</taxon>
        <taxon>Mycobacteriales</taxon>
        <taxon>Corynebacteriaceae</taxon>
        <taxon>Corynebacterium</taxon>
    </lineage>
</organism>
<comment type="function">
    <text evidence="1">Catalyzes a trans-dehydration via an enolate intermediate.</text>
</comment>
<comment type="catalytic activity">
    <reaction>
        <text>3-dehydroquinate = 3-dehydroshikimate + H2O</text>
        <dbReference type="Rhea" id="RHEA:21096"/>
        <dbReference type="ChEBI" id="CHEBI:15377"/>
        <dbReference type="ChEBI" id="CHEBI:16630"/>
        <dbReference type="ChEBI" id="CHEBI:32364"/>
        <dbReference type="EC" id="4.2.1.10"/>
    </reaction>
</comment>
<comment type="pathway">
    <text>Metabolic intermediate biosynthesis; chorismate biosynthesis; chorismate from D-erythrose 4-phosphate and phosphoenolpyruvate: step 3/7.</text>
</comment>
<comment type="subunit">
    <text evidence="1">Homododecamer.</text>
</comment>
<comment type="similarity">
    <text evidence="2">Belongs to the type-II 3-dehydroquinase family.</text>
</comment>
<name>AROQ2_COREF</name>
<evidence type="ECO:0000250" key="1"/>
<evidence type="ECO:0000305" key="2"/>